<comment type="function">
    <text evidence="1">Plays a role in cell envelope biogenesis, maintenance of cell envelope integrity and membrane homeostasis.</text>
</comment>
<comment type="subcellular location">
    <subcellularLocation>
        <location evidence="1">Cell inner membrane</location>
        <topology evidence="1">Multi-pass membrane protein</topology>
    </subcellularLocation>
</comment>
<comment type="similarity">
    <text evidence="1">Belongs to the YciB family.</text>
</comment>
<feature type="chain" id="PRO_1000020986" description="Inner membrane-spanning protein YciB">
    <location>
        <begin position="1"/>
        <end position="220"/>
    </location>
</feature>
<feature type="transmembrane region" description="Helical" evidence="1">
    <location>
        <begin position="20"/>
        <end position="40"/>
    </location>
</feature>
<feature type="transmembrane region" description="Helical" evidence="1">
    <location>
        <begin position="57"/>
        <end position="77"/>
    </location>
</feature>
<feature type="transmembrane region" description="Helical" evidence="1">
    <location>
        <begin position="86"/>
        <end position="106"/>
    </location>
</feature>
<feature type="transmembrane region" description="Helical" evidence="1">
    <location>
        <begin position="123"/>
        <end position="143"/>
    </location>
</feature>
<feature type="transmembrane region" description="Helical" evidence="1">
    <location>
        <begin position="156"/>
        <end position="176"/>
    </location>
</feature>
<feature type="transmembrane region" description="Helical" evidence="1">
    <location>
        <begin position="187"/>
        <end position="207"/>
    </location>
</feature>
<proteinExistence type="inferred from homology"/>
<organism>
    <name type="scientific">Brucella abortus (strain 2308)</name>
    <dbReference type="NCBI Taxonomy" id="359391"/>
    <lineage>
        <taxon>Bacteria</taxon>
        <taxon>Pseudomonadati</taxon>
        <taxon>Pseudomonadota</taxon>
        <taxon>Alphaproteobacteria</taxon>
        <taxon>Hyphomicrobiales</taxon>
        <taxon>Brucellaceae</taxon>
        <taxon>Brucella/Ochrobactrum group</taxon>
        <taxon>Brucella</taxon>
    </lineage>
</organism>
<sequence length="220" mass="24794">MEHPVFERDPSEKSETERREVPPLLKLALELGPLLVFFFANARGEMLIERFPILGSIGAPIFLATALFMAATVIALAISWSMTRTLPIMPLVSGIVVLVFGALTLWLHNDTFIKMKPTIVNTLFGGILLGGLFFGKSLLGYVFDSAFRLDAEGWRKLTLRWGLFFIFLAIVNEIVWRNFSTDTWVSFKVWGIMPITIVFTLLQMPLIQKHSLTDEENTAS</sequence>
<dbReference type="EMBL" id="AM040264">
    <property type="protein sequence ID" value="CAJ11891.1"/>
    <property type="molecule type" value="Genomic_DNA"/>
</dbReference>
<dbReference type="RefSeq" id="WP_002965003.1">
    <property type="nucleotide sequence ID" value="NZ_KN046823.1"/>
</dbReference>
<dbReference type="SMR" id="Q2YLU9"/>
<dbReference type="STRING" id="359391.BAB1_1935"/>
<dbReference type="KEGG" id="bmf:BAB1_1935"/>
<dbReference type="PATRIC" id="fig|359391.11.peg.1175"/>
<dbReference type="HOGENOM" id="CLU_089554_1_1_5"/>
<dbReference type="PhylomeDB" id="Q2YLU9"/>
<dbReference type="Proteomes" id="UP000002719">
    <property type="component" value="Chromosome I"/>
</dbReference>
<dbReference type="GO" id="GO:0005886">
    <property type="term" value="C:plasma membrane"/>
    <property type="evidence" value="ECO:0007669"/>
    <property type="project" value="UniProtKB-SubCell"/>
</dbReference>
<dbReference type="HAMAP" id="MF_00189">
    <property type="entry name" value="YciB"/>
    <property type="match status" value="1"/>
</dbReference>
<dbReference type="InterPro" id="IPR006008">
    <property type="entry name" value="YciB"/>
</dbReference>
<dbReference type="NCBIfam" id="TIGR00997">
    <property type="entry name" value="ispZ"/>
    <property type="match status" value="1"/>
</dbReference>
<dbReference type="NCBIfam" id="NF001323">
    <property type="entry name" value="PRK00259.1-1"/>
    <property type="match status" value="1"/>
</dbReference>
<dbReference type="PANTHER" id="PTHR36917:SF1">
    <property type="entry name" value="INNER MEMBRANE-SPANNING PROTEIN YCIB"/>
    <property type="match status" value="1"/>
</dbReference>
<dbReference type="PANTHER" id="PTHR36917">
    <property type="entry name" value="INTRACELLULAR SEPTATION PROTEIN A-RELATED"/>
    <property type="match status" value="1"/>
</dbReference>
<dbReference type="Pfam" id="PF04279">
    <property type="entry name" value="IspA"/>
    <property type="match status" value="1"/>
</dbReference>
<gene>
    <name evidence="1" type="primary">yciB</name>
    <name type="ordered locus">BAB1_1935</name>
</gene>
<name>YCIB_BRUA2</name>
<accession>Q2YLU9</accession>
<reference key="1">
    <citation type="journal article" date="2005" name="Infect. Immun.">
        <title>Whole-genome analyses of speciation events in pathogenic Brucellae.</title>
        <authorList>
            <person name="Chain P.S."/>
            <person name="Comerci D.J."/>
            <person name="Tolmasky M.E."/>
            <person name="Larimer F.W."/>
            <person name="Malfatti S.A."/>
            <person name="Vergez L.M."/>
            <person name="Aguero F."/>
            <person name="Land M.L."/>
            <person name="Ugalde R.A."/>
            <person name="Garcia E."/>
        </authorList>
    </citation>
    <scope>NUCLEOTIDE SEQUENCE [LARGE SCALE GENOMIC DNA]</scope>
    <source>
        <strain>2308</strain>
    </source>
</reference>
<evidence type="ECO:0000255" key="1">
    <source>
        <dbReference type="HAMAP-Rule" id="MF_00189"/>
    </source>
</evidence>
<protein>
    <recommendedName>
        <fullName evidence="1">Inner membrane-spanning protein YciB</fullName>
    </recommendedName>
</protein>
<keyword id="KW-0997">Cell inner membrane</keyword>
<keyword id="KW-1003">Cell membrane</keyword>
<keyword id="KW-0472">Membrane</keyword>
<keyword id="KW-1185">Reference proteome</keyword>
<keyword id="KW-0812">Transmembrane</keyword>
<keyword id="KW-1133">Transmembrane helix</keyword>